<accession>P55532</accession>
<feature type="chain" id="PRO_0000200893" description="Uncharacterized protein y4kN">
    <location>
        <begin position="1"/>
        <end position="140"/>
    </location>
</feature>
<organism>
    <name type="scientific">Sinorhizobium fredii (strain NBRC 101917 / NGR234)</name>
    <dbReference type="NCBI Taxonomy" id="394"/>
    <lineage>
        <taxon>Bacteria</taxon>
        <taxon>Pseudomonadati</taxon>
        <taxon>Pseudomonadota</taxon>
        <taxon>Alphaproteobacteria</taxon>
        <taxon>Hyphomicrobiales</taxon>
        <taxon>Rhizobiaceae</taxon>
        <taxon>Sinorhizobium/Ensifer group</taxon>
        <taxon>Sinorhizobium</taxon>
    </lineage>
</organism>
<dbReference type="EMBL" id="U00090">
    <property type="protein sequence ID" value="AAB91745.1"/>
    <property type="molecule type" value="Genomic_DNA"/>
</dbReference>
<dbReference type="PIR" id="T10868">
    <property type="entry name" value="T10868"/>
</dbReference>
<dbReference type="RefSeq" id="NP_443943.1">
    <property type="nucleotide sequence ID" value="NC_000914.2"/>
</dbReference>
<dbReference type="SMR" id="P55532"/>
<dbReference type="KEGG" id="rhi:NGR_a02820"/>
<dbReference type="HOGENOM" id="CLU_1833605_0_0_5"/>
<dbReference type="Proteomes" id="UP000001054">
    <property type="component" value="Plasmid pNGR234a"/>
</dbReference>
<reference key="1">
    <citation type="journal article" date="1997" name="Nature">
        <title>Molecular basis of symbiosis between Rhizobium and legumes.</title>
        <authorList>
            <person name="Freiberg C.A."/>
            <person name="Fellay R."/>
            <person name="Bairoch A."/>
            <person name="Broughton W.J."/>
            <person name="Rosenthal A."/>
            <person name="Perret X."/>
        </authorList>
    </citation>
    <scope>NUCLEOTIDE SEQUENCE [LARGE SCALE GENOMIC DNA]</scope>
    <source>
        <strain>NBRC 101917 / NGR234</strain>
    </source>
</reference>
<reference key="2">
    <citation type="journal article" date="2009" name="Appl. Environ. Microbiol.">
        <title>Rhizobium sp. strain NGR234 possesses a remarkable number of secretion systems.</title>
        <authorList>
            <person name="Schmeisser C."/>
            <person name="Liesegang H."/>
            <person name="Krysciak D."/>
            <person name="Bakkou N."/>
            <person name="Le Quere A."/>
            <person name="Wollherr A."/>
            <person name="Heinemeyer I."/>
            <person name="Morgenstern B."/>
            <person name="Pommerening-Roeser A."/>
            <person name="Flores M."/>
            <person name="Palacios R."/>
            <person name="Brenner S."/>
            <person name="Gottschalk G."/>
            <person name="Schmitz R.A."/>
            <person name="Broughton W.J."/>
            <person name="Perret X."/>
            <person name="Strittmatter A.W."/>
            <person name="Streit W.R."/>
        </authorList>
    </citation>
    <scope>NUCLEOTIDE SEQUENCE [LARGE SCALE GENOMIC DNA]</scope>
    <source>
        <strain>NBRC 101917 / NGR234</strain>
    </source>
</reference>
<keyword id="KW-0614">Plasmid</keyword>
<keyword id="KW-1185">Reference proteome</keyword>
<proteinExistence type="predicted"/>
<name>Y4KN_SINFN</name>
<protein>
    <recommendedName>
        <fullName>Uncharacterized protein y4kN</fullName>
    </recommendedName>
</protein>
<sequence length="140" mass="15693">MPADRCKGWLGLGAVQASPINWIGRYSFGTPEEEVSLSNDAEPEGIGAIDQLYDILEMLEEDIKDLEGARRERVNVFLYQGIFEAISFLDELGMAGRIGLSAMELDKFQRMSGTIDNAVLRQMTGRLKSLLREANCLYDR</sequence>
<gene>
    <name type="ordered locus">NGR_a02820</name>
    <name type="ORF">y4kN</name>
</gene>
<geneLocation type="plasmid">
    <name>sym pNGR234a</name>
</geneLocation>